<evidence type="ECO:0000255" key="1">
    <source>
        <dbReference type="HAMAP-Rule" id="MF_01310"/>
    </source>
</evidence>
<evidence type="ECO:0000305" key="2"/>
<name>RS11_PARXL</name>
<gene>
    <name evidence="1" type="primary">rpsK</name>
    <name type="ordered locus">Bxeno_A4057</name>
    <name type="ORF">Bxe_A0338</name>
</gene>
<sequence length="134" mass="14204">MAKASNNSAAQRVRKKVKKNVAEGVVHVHASFNNTIITITDRQGNALAWATSGGQGFKGSRKSTPFAAQVAAESAGRVAMEYGVKNLEVRIKGPGPGRESAVRALHGLGIKITAISDVTPVPHNGCRPPKRRRI</sequence>
<dbReference type="EMBL" id="CP000270">
    <property type="protein sequence ID" value="ABE32595.1"/>
    <property type="molecule type" value="Genomic_DNA"/>
</dbReference>
<dbReference type="RefSeq" id="WP_006052224.1">
    <property type="nucleotide sequence ID" value="NZ_CP008760.1"/>
</dbReference>
<dbReference type="SMR" id="Q13TJ4"/>
<dbReference type="STRING" id="266265.Bxe_A0338"/>
<dbReference type="GeneID" id="97311016"/>
<dbReference type="KEGG" id="bxb:DR64_2508"/>
<dbReference type="KEGG" id="bxe:Bxe_A0338"/>
<dbReference type="eggNOG" id="COG0100">
    <property type="taxonomic scope" value="Bacteria"/>
</dbReference>
<dbReference type="OrthoDB" id="9806415at2"/>
<dbReference type="Proteomes" id="UP000001817">
    <property type="component" value="Chromosome 1"/>
</dbReference>
<dbReference type="GO" id="GO:1990904">
    <property type="term" value="C:ribonucleoprotein complex"/>
    <property type="evidence" value="ECO:0007669"/>
    <property type="project" value="UniProtKB-KW"/>
</dbReference>
<dbReference type="GO" id="GO:0005840">
    <property type="term" value="C:ribosome"/>
    <property type="evidence" value="ECO:0007669"/>
    <property type="project" value="UniProtKB-KW"/>
</dbReference>
<dbReference type="GO" id="GO:0019843">
    <property type="term" value="F:rRNA binding"/>
    <property type="evidence" value="ECO:0007669"/>
    <property type="project" value="UniProtKB-UniRule"/>
</dbReference>
<dbReference type="GO" id="GO:0003735">
    <property type="term" value="F:structural constituent of ribosome"/>
    <property type="evidence" value="ECO:0007669"/>
    <property type="project" value="InterPro"/>
</dbReference>
<dbReference type="GO" id="GO:0006412">
    <property type="term" value="P:translation"/>
    <property type="evidence" value="ECO:0007669"/>
    <property type="project" value="UniProtKB-UniRule"/>
</dbReference>
<dbReference type="FunFam" id="3.30.420.80:FF:000001">
    <property type="entry name" value="30S ribosomal protein S11"/>
    <property type="match status" value="1"/>
</dbReference>
<dbReference type="Gene3D" id="3.30.420.80">
    <property type="entry name" value="Ribosomal protein S11"/>
    <property type="match status" value="1"/>
</dbReference>
<dbReference type="HAMAP" id="MF_01310">
    <property type="entry name" value="Ribosomal_uS11"/>
    <property type="match status" value="1"/>
</dbReference>
<dbReference type="InterPro" id="IPR001971">
    <property type="entry name" value="Ribosomal_uS11"/>
</dbReference>
<dbReference type="InterPro" id="IPR019981">
    <property type="entry name" value="Ribosomal_uS11_bac-type"/>
</dbReference>
<dbReference type="InterPro" id="IPR018102">
    <property type="entry name" value="Ribosomal_uS11_CS"/>
</dbReference>
<dbReference type="InterPro" id="IPR036967">
    <property type="entry name" value="Ribosomal_uS11_sf"/>
</dbReference>
<dbReference type="NCBIfam" id="NF003698">
    <property type="entry name" value="PRK05309.1"/>
    <property type="match status" value="1"/>
</dbReference>
<dbReference type="NCBIfam" id="TIGR03632">
    <property type="entry name" value="uS11_bact"/>
    <property type="match status" value="1"/>
</dbReference>
<dbReference type="PANTHER" id="PTHR11759">
    <property type="entry name" value="40S RIBOSOMAL PROTEIN S14/30S RIBOSOMAL PROTEIN S11"/>
    <property type="match status" value="1"/>
</dbReference>
<dbReference type="Pfam" id="PF00411">
    <property type="entry name" value="Ribosomal_S11"/>
    <property type="match status" value="1"/>
</dbReference>
<dbReference type="PIRSF" id="PIRSF002131">
    <property type="entry name" value="Ribosomal_S11"/>
    <property type="match status" value="1"/>
</dbReference>
<dbReference type="SUPFAM" id="SSF53137">
    <property type="entry name" value="Translational machinery components"/>
    <property type="match status" value="1"/>
</dbReference>
<dbReference type="PROSITE" id="PS00054">
    <property type="entry name" value="RIBOSOMAL_S11"/>
    <property type="match status" value="1"/>
</dbReference>
<organism>
    <name type="scientific">Paraburkholderia xenovorans (strain LB400)</name>
    <dbReference type="NCBI Taxonomy" id="266265"/>
    <lineage>
        <taxon>Bacteria</taxon>
        <taxon>Pseudomonadati</taxon>
        <taxon>Pseudomonadota</taxon>
        <taxon>Betaproteobacteria</taxon>
        <taxon>Burkholderiales</taxon>
        <taxon>Burkholderiaceae</taxon>
        <taxon>Paraburkholderia</taxon>
    </lineage>
</organism>
<proteinExistence type="inferred from homology"/>
<reference key="1">
    <citation type="journal article" date="2006" name="Proc. Natl. Acad. Sci. U.S.A.">
        <title>Burkholderia xenovorans LB400 harbors a multi-replicon, 9.73-Mbp genome shaped for versatility.</title>
        <authorList>
            <person name="Chain P.S.G."/>
            <person name="Denef V.J."/>
            <person name="Konstantinidis K.T."/>
            <person name="Vergez L.M."/>
            <person name="Agullo L."/>
            <person name="Reyes V.L."/>
            <person name="Hauser L."/>
            <person name="Cordova M."/>
            <person name="Gomez L."/>
            <person name="Gonzalez M."/>
            <person name="Land M."/>
            <person name="Lao V."/>
            <person name="Larimer F."/>
            <person name="LiPuma J.J."/>
            <person name="Mahenthiralingam E."/>
            <person name="Malfatti S.A."/>
            <person name="Marx C.J."/>
            <person name="Parnell J.J."/>
            <person name="Ramette A."/>
            <person name="Richardson P."/>
            <person name="Seeger M."/>
            <person name="Smith D."/>
            <person name="Spilker T."/>
            <person name="Sul W.J."/>
            <person name="Tsoi T.V."/>
            <person name="Ulrich L.E."/>
            <person name="Zhulin I.B."/>
            <person name="Tiedje J.M."/>
        </authorList>
    </citation>
    <scope>NUCLEOTIDE SEQUENCE [LARGE SCALE GENOMIC DNA]</scope>
    <source>
        <strain>LB400</strain>
    </source>
</reference>
<accession>Q13TJ4</accession>
<comment type="function">
    <text evidence="1">Located on the platform of the 30S subunit, it bridges several disparate RNA helices of the 16S rRNA. Forms part of the Shine-Dalgarno cleft in the 70S ribosome.</text>
</comment>
<comment type="subunit">
    <text evidence="1">Part of the 30S ribosomal subunit. Interacts with proteins S7 and S18. Binds to IF-3.</text>
</comment>
<comment type="similarity">
    <text evidence="1">Belongs to the universal ribosomal protein uS11 family.</text>
</comment>
<keyword id="KW-1185">Reference proteome</keyword>
<keyword id="KW-0687">Ribonucleoprotein</keyword>
<keyword id="KW-0689">Ribosomal protein</keyword>
<keyword id="KW-0694">RNA-binding</keyword>
<keyword id="KW-0699">rRNA-binding</keyword>
<protein>
    <recommendedName>
        <fullName evidence="1">Small ribosomal subunit protein uS11</fullName>
    </recommendedName>
    <alternativeName>
        <fullName evidence="2">30S ribosomal protein S11</fullName>
    </alternativeName>
</protein>
<feature type="chain" id="PRO_0000294731" description="Small ribosomal subunit protein uS11">
    <location>
        <begin position="1"/>
        <end position="134"/>
    </location>
</feature>